<name>DNAK_CLOBB</name>
<reference key="1">
    <citation type="submission" date="2008-04" db="EMBL/GenBank/DDBJ databases">
        <title>Complete sequence of Clostridium botulinum strain Eklund.</title>
        <authorList>
            <person name="Brinkac L.M."/>
            <person name="Brown J.L."/>
            <person name="Bruce D."/>
            <person name="Detter C."/>
            <person name="Munk C."/>
            <person name="Smith L.A."/>
            <person name="Smith T.J."/>
            <person name="Sutton G."/>
            <person name="Brettin T.S."/>
        </authorList>
    </citation>
    <scope>NUCLEOTIDE SEQUENCE [LARGE SCALE GENOMIC DNA]</scope>
    <source>
        <strain>Eklund 17B / Type B</strain>
    </source>
</reference>
<feature type="chain" id="PRO_1000119689" description="Chaperone protein DnaK">
    <location>
        <begin position="1"/>
        <end position="616"/>
    </location>
</feature>
<feature type="region of interest" description="Disordered" evidence="2">
    <location>
        <begin position="579"/>
        <end position="616"/>
    </location>
</feature>
<feature type="compositionally biased region" description="Basic and acidic residues" evidence="2">
    <location>
        <begin position="599"/>
        <end position="616"/>
    </location>
</feature>
<feature type="modified residue" description="Phosphothreonine; by autocatalysis" evidence="1">
    <location>
        <position position="175"/>
    </location>
</feature>
<accession>B2TLZ7</accession>
<evidence type="ECO:0000255" key="1">
    <source>
        <dbReference type="HAMAP-Rule" id="MF_00332"/>
    </source>
</evidence>
<evidence type="ECO:0000256" key="2">
    <source>
        <dbReference type="SAM" id="MobiDB-lite"/>
    </source>
</evidence>
<sequence>MGKIIGIDLGTTNSCVAVMEGGEPVVITNSEGARTTPSVVSFQADGERLVGQVAKRQSITNPDKTIISIKRHMGTSYKVDIDGKNYSPQEISAMVLQKIKADAESYLGESVTQAVITVPAYFNDSERQATKDAGKIAGLEVLRIINEPTAAALAYGLDKMDSNHKILVYDLGGGTFDVSILELGDGVFEVLSTNGDTKLGGDDFDQKVMDYIAETFKAENGIDLRQDKMALQRLKEAAEKAKIELSSSMQTNINLPFITADATGPKHIDLNLTRAKFNEITNDLVQRSIEPMKKALSDAAISIDEIEKIILVGGSTRIPAVVEAVKNFTGKDPSKGVNPDECVAVGAAVQAGVLTGEVKDVLLLDVTPLTLGIETAGGIATPLIERNTTIPTKKSQIFSTAADSQTSVEINVVQGERQMAMDNKSLGRFTLSGIAPAPRGIPQIEVTFDIDANGIVKVSALDKGTGKEANITITASTNLNDDEIDKAVKEAEKFAEEDKKRKEKVETLNNADQLIYQTEKALTELGDKVSAEDKAKVTEKLEALKAIKDGEDLEAIKKATEELTQEFYAVSSKVYAAAGGDPSQAGGFDPNAAGGAQQEPHDDNVVDADFKVDDDK</sequence>
<protein>
    <recommendedName>
        <fullName evidence="1">Chaperone protein DnaK</fullName>
    </recommendedName>
    <alternativeName>
        <fullName evidence="1">HSP70</fullName>
    </alternativeName>
    <alternativeName>
        <fullName evidence="1">Heat shock 70 kDa protein</fullName>
    </alternativeName>
    <alternativeName>
        <fullName evidence="1">Heat shock protein 70</fullName>
    </alternativeName>
</protein>
<dbReference type="EMBL" id="CP001056">
    <property type="protein sequence ID" value="ACD22007.1"/>
    <property type="molecule type" value="Genomic_DNA"/>
</dbReference>
<dbReference type="SMR" id="B2TLZ7"/>
<dbReference type="KEGG" id="cbk:CLL_A0891"/>
<dbReference type="PATRIC" id="fig|935198.13.peg.841"/>
<dbReference type="HOGENOM" id="CLU_005965_2_1_9"/>
<dbReference type="Proteomes" id="UP000001195">
    <property type="component" value="Chromosome"/>
</dbReference>
<dbReference type="GO" id="GO:0005524">
    <property type="term" value="F:ATP binding"/>
    <property type="evidence" value="ECO:0007669"/>
    <property type="project" value="UniProtKB-UniRule"/>
</dbReference>
<dbReference type="GO" id="GO:0140662">
    <property type="term" value="F:ATP-dependent protein folding chaperone"/>
    <property type="evidence" value="ECO:0007669"/>
    <property type="project" value="InterPro"/>
</dbReference>
<dbReference type="GO" id="GO:0051082">
    <property type="term" value="F:unfolded protein binding"/>
    <property type="evidence" value="ECO:0007669"/>
    <property type="project" value="InterPro"/>
</dbReference>
<dbReference type="CDD" id="cd10234">
    <property type="entry name" value="ASKHA_NBD_HSP70_DnaK-like"/>
    <property type="match status" value="1"/>
</dbReference>
<dbReference type="FunFam" id="2.60.34.10:FF:000014">
    <property type="entry name" value="Chaperone protein DnaK HSP70"/>
    <property type="match status" value="1"/>
</dbReference>
<dbReference type="FunFam" id="1.20.1270.10:FF:000001">
    <property type="entry name" value="Molecular chaperone DnaK"/>
    <property type="match status" value="1"/>
</dbReference>
<dbReference type="FunFam" id="3.30.420.40:FF:000071">
    <property type="entry name" value="Molecular chaperone DnaK"/>
    <property type="match status" value="1"/>
</dbReference>
<dbReference type="FunFam" id="3.90.640.10:FF:000003">
    <property type="entry name" value="Molecular chaperone DnaK"/>
    <property type="match status" value="1"/>
</dbReference>
<dbReference type="Gene3D" id="1.20.1270.10">
    <property type="match status" value="1"/>
</dbReference>
<dbReference type="Gene3D" id="3.30.420.40">
    <property type="match status" value="2"/>
</dbReference>
<dbReference type="Gene3D" id="3.90.640.10">
    <property type="entry name" value="Actin, Chain A, domain 4"/>
    <property type="match status" value="1"/>
</dbReference>
<dbReference type="Gene3D" id="2.60.34.10">
    <property type="entry name" value="Substrate Binding Domain Of DNAk, Chain A, domain 1"/>
    <property type="match status" value="1"/>
</dbReference>
<dbReference type="HAMAP" id="MF_00332">
    <property type="entry name" value="DnaK"/>
    <property type="match status" value="1"/>
</dbReference>
<dbReference type="InterPro" id="IPR043129">
    <property type="entry name" value="ATPase_NBD"/>
</dbReference>
<dbReference type="InterPro" id="IPR012725">
    <property type="entry name" value="Chaperone_DnaK"/>
</dbReference>
<dbReference type="InterPro" id="IPR018181">
    <property type="entry name" value="Heat_shock_70_CS"/>
</dbReference>
<dbReference type="InterPro" id="IPR029048">
    <property type="entry name" value="HSP70_C_sf"/>
</dbReference>
<dbReference type="InterPro" id="IPR029047">
    <property type="entry name" value="HSP70_peptide-bd_sf"/>
</dbReference>
<dbReference type="InterPro" id="IPR013126">
    <property type="entry name" value="Hsp_70_fam"/>
</dbReference>
<dbReference type="NCBIfam" id="NF001413">
    <property type="entry name" value="PRK00290.1"/>
    <property type="match status" value="1"/>
</dbReference>
<dbReference type="NCBIfam" id="TIGR02350">
    <property type="entry name" value="prok_dnaK"/>
    <property type="match status" value="1"/>
</dbReference>
<dbReference type="PANTHER" id="PTHR19375">
    <property type="entry name" value="HEAT SHOCK PROTEIN 70KDA"/>
    <property type="match status" value="1"/>
</dbReference>
<dbReference type="Pfam" id="PF00012">
    <property type="entry name" value="HSP70"/>
    <property type="match status" value="1"/>
</dbReference>
<dbReference type="PRINTS" id="PR00301">
    <property type="entry name" value="HEATSHOCK70"/>
</dbReference>
<dbReference type="SUPFAM" id="SSF53067">
    <property type="entry name" value="Actin-like ATPase domain"/>
    <property type="match status" value="2"/>
</dbReference>
<dbReference type="SUPFAM" id="SSF100934">
    <property type="entry name" value="Heat shock protein 70kD (HSP70), C-terminal subdomain"/>
    <property type="match status" value="1"/>
</dbReference>
<dbReference type="SUPFAM" id="SSF100920">
    <property type="entry name" value="Heat shock protein 70kD (HSP70), peptide-binding domain"/>
    <property type="match status" value="1"/>
</dbReference>
<dbReference type="PROSITE" id="PS00297">
    <property type="entry name" value="HSP70_1"/>
    <property type="match status" value="1"/>
</dbReference>
<dbReference type="PROSITE" id="PS00329">
    <property type="entry name" value="HSP70_2"/>
    <property type="match status" value="1"/>
</dbReference>
<dbReference type="PROSITE" id="PS01036">
    <property type="entry name" value="HSP70_3"/>
    <property type="match status" value="1"/>
</dbReference>
<organism>
    <name type="scientific">Clostridium botulinum (strain Eklund 17B / Type B)</name>
    <dbReference type="NCBI Taxonomy" id="935198"/>
    <lineage>
        <taxon>Bacteria</taxon>
        <taxon>Bacillati</taxon>
        <taxon>Bacillota</taxon>
        <taxon>Clostridia</taxon>
        <taxon>Eubacteriales</taxon>
        <taxon>Clostridiaceae</taxon>
        <taxon>Clostridium</taxon>
    </lineage>
</organism>
<comment type="function">
    <text evidence="1">Acts as a chaperone.</text>
</comment>
<comment type="induction">
    <text evidence="1">By stress conditions e.g. heat shock.</text>
</comment>
<comment type="similarity">
    <text evidence="1">Belongs to the heat shock protein 70 family.</text>
</comment>
<proteinExistence type="inferred from homology"/>
<gene>
    <name evidence="1" type="primary">dnaK</name>
    <name type="ordered locus">CLL_A0891</name>
</gene>
<keyword id="KW-0067">ATP-binding</keyword>
<keyword id="KW-0143">Chaperone</keyword>
<keyword id="KW-0547">Nucleotide-binding</keyword>
<keyword id="KW-0597">Phosphoprotein</keyword>
<keyword id="KW-0346">Stress response</keyword>